<comment type="function">
    <text evidence="1">Cleaves peptides in various proteins in a process that requires ATP hydrolysis. Has a chymotrypsin-like activity. Plays a major role in the degradation of misfolded proteins.</text>
</comment>
<comment type="catalytic activity">
    <reaction evidence="1">
        <text>Hydrolysis of proteins to small peptides in the presence of ATP and magnesium. alpha-casein is the usual test substrate. In the absence of ATP, only oligopeptides shorter than five residues are hydrolyzed (such as succinyl-Leu-Tyr-|-NHMec, and Leu-Tyr-Leu-|-Tyr-Trp, in which cleavage of the -Tyr-|-Leu- and -Tyr-|-Trp bonds also occurs).</text>
        <dbReference type="EC" id="3.4.21.92"/>
    </reaction>
</comment>
<comment type="subunit">
    <text evidence="1">Fourteen ClpP subunits assemble into 2 heptameric rings which stack back to back to give a disk-like structure with a central cavity, resembling the structure of eukaryotic proteasomes.</text>
</comment>
<comment type="subcellular location">
    <subcellularLocation>
        <location evidence="1">Cytoplasm</location>
    </subcellularLocation>
</comment>
<comment type="similarity">
    <text evidence="1">Belongs to the peptidase S14 family.</text>
</comment>
<dbReference type="EC" id="3.4.21.92" evidence="1"/>
<dbReference type="EMBL" id="AE000783">
    <property type="protein sequence ID" value="AAC67097.2"/>
    <property type="molecule type" value="Genomic_DNA"/>
</dbReference>
<dbReference type="PIR" id="D70194">
    <property type="entry name" value="D70194"/>
</dbReference>
<dbReference type="RefSeq" id="NP_212891.2">
    <property type="nucleotide sequence ID" value="NC_001318.1"/>
</dbReference>
<dbReference type="RefSeq" id="WP_002657518.1">
    <property type="nucleotide sequence ID" value="NC_001318.1"/>
</dbReference>
<dbReference type="SMR" id="O51698"/>
<dbReference type="STRING" id="224326.BB_0757"/>
<dbReference type="PaxDb" id="224326-BB_0757"/>
<dbReference type="EnsemblBacteria" id="AAC67097">
    <property type="protein sequence ID" value="AAC67097"/>
    <property type="gene ID" value="BB_0757"/>
</dbReference>
<dbReference type="KEGG" id="bbu:BB_0757"/>
<dbReference type="PATRIC" id="fig|224326.49.peg.1148"/>
<dbReference type="HOGENOM" id="CLU_058707_3_2_12"/>
<dbReference type="OrthoDB" id="350336at2"/>
<dbReference type="BRENDA" id="3.4.21.92">
    <property type="organism ID" value="902"/>
</dbReference>
<dbReference type="Proteomes" id="UP000001807">
    <property type="component" value="Chromosome"/>
</dbReference>
<dbReference type="GO" id="GO:0005737">
    <property type="term" value="C:cytoplasm"/>
    <property type="evidence" value="ECO:0007669"/>
    <property type="project" value="UniProtKB-SubCell"/>
</dbReference>
<dbReference type="GO" id="GO:0009368">
    <property type="term" value="C:endopeptidase Clp complex"/>
    <property type="evidence" value="ECO:0007669"/>
    <property type="project" value="TreeGrafter"/>
</dbReference>
<dbReference type="GO" id="GO:0004176">
    <property type="term" value="F:ATP-dependent peptidase activity"/>
    <property type="evidence" value="ECO:0007669"/>
    <property type="project" value="InterPro"/>
</dbReference>
<dbReference type="GO" id="GO:0051117">
    <property type="term" value="F:ATPase binding"/>
    <property type="evidence" value="ECO:0007669"/>
    <property type="project" value="TreeGrafter"/>
</dbReference>
<dbReference type="GO" id="GO:0004252">
    <property type="term" value="F:serine-type endopeptidase activity"/>
    <property type="evidence" value="ECO:0007669"/>
    <property type="project" value="UniProtKB-UniRule"/>
</dbReference>
<dbReference type="GO" id="GO:0006515">
    <property type="term" value="P:protein quality control for misfolded or incompletely synthesized proteins"/>
    <property type="evidence" value="ECO:0007669"/>
    <property type="project" value="TreeGrafter"/>
</dbReference>
<dbReference type="CDD" id="cd07017">
    <property type="entry name" value="S14_ClpP_2"/>
    <property type="match status" value="1"/>
</dbReference>
<dbReference type="Gene3D" id="3.90.226.10">
    <property type="entry name" value="2-enoyl-CoA Hydratase, Chain A, domain 1"/>
    <property type="match status" value="1"/>
</dbReference>
<dbReference type="HAMAP" id="MF_00444">
    <property type="entry name" value="ClpP"/>
    <property type="match status" value="1"/>
</dbReference>
<dbReference type="InterPro" id="IPR001907">
    <property type="entry name" value="ClpP"/>
</dbReference>
<dbReference type="InterPro" id="IPR029045">
    <property type="entry name" value="ClpP/crotonase-like_dom_sf"/>
</dbReference>
<dbReference type="InterPro" id="IPR023562">
    <property type="entry name" value="ClpP/TepA"/>
</dbReference>
<dbReference type="InterPro" id="IPR033135">
    <property type="entry name" value="ClpP_His_AS"/>
</dbReference>
<dbReference type="NCBIfam" id="NF011089">
    <property type="entry name" value="PRK14512.1"/>
    <property type="match status" value="1"/>
</dbReference>
<dbReference type="PANTHER" id="PTHR10381">
    <property type="entry name" value="ATP-DEPENDENT CLP PROTEASE PROTEOLYTIC SUBUNIT"/>
    <property type="match status" value="1"/>
</dbReference>
<dbReference type="PANTHER" id="PTHR10381:SF70">
    <property type="entry name" value="ATP-DEPENDENT CLP PROTEASE PROTEOLYTIC SUBUNIT"/>
    <property type="match status" value="1"/>
</dbReference>
<dbReference type="Pfam" id="PF00574">
    <property type="entry name" value="CLP_protease"/>
    <property type="match status" value="1"/>
</dbReference>
<dbReference type="PRINTS" id="PR00127">
    <property type="entry name" value="CLPPROTEASEP"/>
</dbReference>
<dbReference type="SUPFAM" id="SSF52096">
    <property type="entry name" value="ClpP/crotonase"/>
    <property type="match status" value="1"/>
</dbReference>
<dbReference type="PROSITE" id="PS00382">
    <property type="entry name" value="CLP_PROTEASE_HIS"/>
    <property type="match status" value="1"/>
</dbReference>
<proteinExistence type="inferred from homology"/>
<keyword id="KW-0963">Cytoplasm</keyword>
<keyword id="KW-0378">Hydrolase</keyword>
<keyword id="KW-0645">Protease</keyword>
<keyword id="KW-1185">Reference proteome</keyword>
<keyword id="KW-0720">Serine protease</keyword>
<protein>
    <recommendedName>
        <fullName evidence="1">ATP-dependent Clp protease proteolytic subunit 2</fullName>
        <ecNumber evidence="1">3.4.21.92</ecNumber>
    </recommendedName>
    <alternativeName>
        <fullName evidence="1">Endopeptidase Clp 2</fullName>
    </alternativeName>
</protein>
<sequence length="198" mass="22216">MTGKEDNDACVLHDKSLKLVLKSRSIVIAGEITKDVSRLFQEKILLLEALDFKKPIFVYIDSEGGDIDAGFAIFNMIRFVKPKVFTVGVGLVASAAALIFLAAKLENRFSLPFARYLLHQPLSGFKGVATDIEIYTNELNKVKKELNNIISKETGQKISKIEKDTDRDFWLDSSAAKKYGLVFEVVETKYQLEEFISA</sequence>
<organism>
    <name type="scientific">Borreliella burgdorferi (strain ATCC 35210 / DSM 4680 / CIP 102532 / B31)</name>
    <name type="common">Borrelia burgdorferi</name>
    <dbReference type="NCBI Taxonomy" id="224326"/>
    <lineage>
        <taxon>Bacteria</taxon>
        <taxon>Pseudomonadati</taxon>
        <taxon>Spirochaetota</taxon>
        <taxon>Spirochaetia</taxon>
        <taxon>Spirochaetales</taxon>
        <taxon>Borreliaceae</taxon>
        <taxon>Borreliella</taxon>
    </lineage>
</organism>
<gene>
    <name evidence="1" type="primary">clpP2</name>
    <name type="synonym">clpP-2</name>
    <name type="ordered locus">BB_0757</name>
</gene>
<reference key="1">
    <citation type="journal article" date="1997" name="Nature">
        <title>Genomic sequence of a Lyme disease spirochaete, Borrelia burgdorferi.</title>
        <authorList>
            <person name="Fraser C.M."/>
            <person name="Casjens S."/>
            <person name="Huang W.M."/>
            <person name="Sutton G.G."/>
            <person name="Clayton R.A."/>
            <person name="Lathigra R."/>
            <person name="White O."/>
            <person name="Ketchum K.A."/>
            <person name="Dodson R.J."/>
            <person name="Hickey E.K."/>
            <person name="Gwinn M.L."/>
            <person name="Dougherty B.A."/>
            <person name="Tomb J.-F."/>
            <person name="Fleischmann R.D."/>
            <person name="Richardson D.L."/>
            <person name="Peterson J.D."/>
            <person name="Kerlavage A.R."/>
            <person name="Quackenbush J."/>
            <person name="Salzberg S.L."/>
            <person name="Hanson M."/>
            <person name="van Vugt R."/>
            <person name="Palmer N."/>
            <person name="Adams M.D."/>
            <person name="Gocayne J.D."/>
            <person name="Weidman J.F."/>
            <person name="Utterback T.R."/>
            <person name="Watthey L."/>
            <person name="McDonald L.A."/>
            <person name="Artiach P."/>
            <person name="Bowman C."/>
            <person name="Garland S.A."/>
            <person name="Fujii C."/>
            <person name="Cotton M.D."/>
            <person name="Horst K."/>
            <person name="Roberts K.M."/>
            <person name="Hatch B."/>
            <person name="Smith H.O."/>
            <person name="Venter J.C."/>
        </authorList>
    </citation>
    <scope>NUCLEOTIDE SEQUENCE [LARGE SCALE GENOMIC DNA]</scope>
    <source>
        <strain>ATCC 35210 / DSM 4680 / CIP 102532 / B31</strain>
    </source>
</reference>
<accession>O51698</accession>
<evidence type="ECO:0000255" key="1">
    <source>
        <dbReference type="HAMAP-Rule" id="MF_00444"/>
    </source>
</evidence>
<name>CLPP2_BORBU</name>
<feature type="chain" id="PRO_0000179510" description="ATP-dependent Clp protease proteolytic subunit 2">
    <location>
        <begin position="1"/>
        <end position="198"/>
    </location>
</feature>
<feature type="active site" description="Nucleophile" evidence="1">
    <location>
        <position position="94"/>
    </location>
</feature>
<feature type="active site" evidence="1">
    <location>
        <position position="119"/>
    </location>
</feature>